<sequence length="104" mass="11974">MKFFVYNPLLKTASLNIKVKAAAKSNDIKEFIIINDVLHLKLSIKAHAQQGKANEEIINFLAKEWQLLRSNLEITKGHTNSLKTILIKNIDEEYLNLILKPYIK</sequence>
<feature type="chain" id="PRO_0000277940" description="UPF0235 protein RBE_0633">
    <location>
        <begin position="1"/>
        <end position="104"/>
    </location>
</feature>
<evidence type="ECO:0000255" key="1">
    <source>
        <dbReference type="HAMAP-Rule" id="MF_00634"/>
    </source>
</evidence>
<comment type="similarity">
    <text evidence="1">Belongs to the UPF0235 family.</text>
</comment>
<name>Y633_RICBR</name>
<organism>
    <name type="scientific">Rickettsia bellii (strain RML369-C)</name>
    <dbReference type="NCBI Taxonomy" id="336407"/>
    <lineage>
        <taxon>Bacteria</taxon>
        <taxon>Pseudomonadati</taxon>
        <taxon>Pseudomonadota</taxon>
        <taxon>Alphaproteobacteria</taxon>
        <taxon>Rickettsiales</taxon>
        <taxon>Rickettsiaceae</taxon>
        <taxon>Rickettsieae</taxon>
        <taxon>Rickettsia</taxon>
        <taxon>belli group</taxon>
    </lineage>
</organism>
<proteinExistence type="inferred from homology"/>
<accession>Q1RIV0</accession>
<protein>
    <recommendedName>
        <fullName evidence="1">UPF0235 protein RBE_0633</fullName>
    </recommendedName>
</protein>
<reference key="1">
    <citation type="journal article" date="2006" name="PLoS Genet.">
        <title>Genome sequence of Rickettsia bellii illuminates the role of amoebae in gene exchanges between intracellular pathogens.</title>
        <authorList>
            <person name="Ogata H."/>
            <person name="La Scola B."/>
            <person name="Audic S."/>
            <person name="Renesto P."/>
            <person name="Blanc G."/>
            <person name="Robert C."/>
            <person name="Fournier P.-E."/>
            <person name="Claverie J.-M."/>
            <person name="Raoult D."/>
        </authorList>
    </citation>
    <scope>NUCLEOTIDE SEQUENCE [LARGE SCALE GENOMIC DNA]</scope>
    <source>
        <strain>RML369-C</strain>
    </source>
</reference>
<gene>
    <name type="ordered locus">RBE_0633</name>
</gene>
<dbReference type="EMBL" id="CP000087">
    <property type="protein sequence ID" value="ABE04714.1"/>
    <property type="molecule type" value="Genomic_DNA"/>
</dbReference>
<dbReference type="RefSeq" id="WP_011477302.1">
    <property type="nucleotide sequence ID" value="NC_007940.1"/>
</dbReference>
<dbReference type="SMR" id="Q1RIV0"/>
<dbReference type="KEGG" id="rbe:RBE_0633"/>
<dbReference type="eggNOG" id="COG1872">
    <property type="taxonomic scope" value="Bacteria"/>
</dbReference>
<dbReference type="HOGENOM" id="CLU_130694_6_2_5"/>
<dbReference type="OrthoDB" id="9801972at2"/>
<dbReference type="Proteomes" id="UP000001951">
    <property type="component" value="Chromosome"/>
</dbReference>
<dbReference type="Gene3D" id="3.30.1200.10">
    <property type="entry name" value="YggU-like"/>
    <property type="match status" value="1"/>
</dbReference>
<dbReference type="HAMAP" id="MF_00634">
    <property type="entry name" value="UPF0235"/>
    <property type="match status" value="1"/>
</dbReference>
<dbReference type="InterPro" id="IPR003746">
    <property type="entry name" value="DUF167"/>
</dbReference>
<dbReference type="InterPro" id="IPR036591">
    <property type="entry name" value="YggU-like_sf"/>
</dbReference>
<dbReference type="NCBIfam" id="TIGR00251">
    <property type="entry name" value="DUF167 family protein"/>
    <property type="match status" value="1"/>
</dbReference>
<dbReference type="NCBIfam" id="NF002419">
    <property type="entry name" value="PRK01530.1"/>
    <property type="match status" value="1"/>
</dbReference>
<dbReference type="Pfam" id="PF02594">
    <property type="entry name" value="DUF167"/>
    <property type="match status" value="1"/>
</dbReference>
<dbReference type="SMART" id="SM01152">
    <property type="entry name" value="DUF167"/>
    <property type="match status" value="1"/>
</dbReference>
<dbReference type="SUPFAM" id="SSF69786">
    <property type="entry name" value="YggU-like"/>
    <property type="match status" value="1"/>
</dbReference>